<accession>B5R0J9</accession>
<comment type="function">
    <text evidence="1">Peptidoglycan polymerase that catalyzes glycan chain elongation from lipid-linked precursors.</text>
</comment>
<comment type="catalytic activity">
    <reaction evidence="1">
        <text>[GlcNAc-(1-&gt;4)-Mur2Ac(oyl-L-Ala-gamma-D-Glu-L-Lys-D-Ala-D-Ala)](n)-di-trans,octa-cis-undecaprenyl diphosphate + beta-D-GlcNAc-(1-&gt;4)-Mur2Ac(oyl-L-Ala-gamma-D-Glu-L-Lys-D-Ala-D-Ala)-di-trans,octa-cis-undecaprenyl diphosphate = [GlcNAc-(1-&gt;4)-Mur2Ac(oyl-L-Ala-gamma-D-Glu-L-Lys-D-Ala-D-Ala)](n+1)-di-trans,octa-cis-undecaprenyl diphosphate + di-trans,octa-cis-undecaprenyl diphosphate + H(+)</text>
        <dbReference type="Rhea" id="RHEA:23708"/>
        <dbReference type="Rhea" id="RHEA-COMP:9602"/>
        <dbReference type="Rhea" id="RHEA-COMP:9603"/>
        <dbReference type="ChEBI" id="CHEBI:15378"/>
        <dbReference type="ChEBI" id="CHEBI:58405"/>
        <dbReference type="ChEBI" id="CHEBI:60033"/>
        <dbReference type="ChEBI" id="CHEBI:78435"/>
        <dbReference type="EC" id="2.4.99.28"/>
    </reaction>
</comment>
<comment type="pathway">
    <text evidence="1">Cell wall biogenesis; peptidoglycan biosynthesis.</text>
</comment>
<comment type="subcellular location">
    <subcellularLocation>
        <location evidence="1">Cell inner membrane</location>
        <topology evidence="1">Single-pass membrane protein</topology>
    </subcellularLocation>
</comment>
<comment type="similarity">
    <text evidence="1">Belongs to the glycosyltransferase 51 family.</text>
</comment>
<organism>
    <name type="scientific">Salmonella enteritidis PT4 (strain P125109)</name>
    <dbReference type="NCBI Taxonomy" id="550537"/>
    <lineage>
        <taxon>Bacteria</taxon>
        <taxon>Pseudomonadati</taxon>
        <taxon>Pseudomonadota</taxon>
        <taxon>Gammaproteobacteria</taxon>
        <taxon>Enterobacterales</taxon>
        <taxon>Enterobacteriaceae</taxon>
        <taxon>Salmonella</taxon>
    </lineage>
</organism>
<gene>
    <name evidence="1" type="primary">mtgA</name>
    <name type="ordered locus">SEN3159</name>
</gene>
<dbReference type="EC" id="2.4.99.28" evidence="1"/>
<dbReference type="EMBL" id="AM933172">
    <property type="protein sequence ID" value="CAR34735.1"/>
    <property type="molecule type" value="Genomic_DNA"/>
</dbReference>
<dbReference type="RefSeq" id="WP_000044648.1">
    <property type="nucleotide sequence ID" value="NC_011294.1"/>
</dbReference>
<dbReference type="SMR" id="B5R0J9"/>
<dbReference type="CAZy" id="GT51">
    <property type="family name" value="Glycosyltransferase Family 51"/>
</dbReference>
<dbReference type="KEGG" id="set:SEN3159"/>
<dbReference type="HOGENOM" id="CLU_006354_1_1_6"/>
<dbReference type="UniPathway" id="UPA00219"/>
<dbReference type="Proteomes" id="UP000000613">
    <property type="component" value="Chromosome"/>
</dbReference>
<dbReference type="GO" id="GO:0009274">
    <property type="term" value="C:peptidoglycan-based cell wall"/>
    <property type="evidence" value="ECO:0007669"/>
    <property type="project" value="InterPro"/>
</dbReference>
<dbReference type="GO" id="GO:0005886">
    <property type="term" value="C:plasma membrane"/>
    <property type="evidence" value="ECO:0007669"/>
    <property type="project" value="UniProtKB-SubCell"/>
</dbReference>
<dbReference type="GO" id="GO:0016763">
    <property type="term" value="F:pentosyltransferase activity"/>
    <property type="evidence" value="ECO:0007669"/>
    <property type="project" value="InterPro"/>
</dbReference>
<dbReference type="GO" id="GO:0008955">
    <property type="term" value="F:peptidoglycan glycosyltransferase activity"/>
    <property type="evidence" value="ECO:0007669"/>
    <property type="project" value="UniProtKB-UniRule"/>
</dbReference>
<dbReference type="GO" id="GO:0071555">
    <property type="term" value="P:cell wall organization"/>
    <property type="evidence" value="ECO:0007669"/>
    <property type="project" value="UniProtKB-KW"/>
</dbReference>
<dbReference type="GO" id="GO:0009252">
    <property type="term" value="P:peptidoglycan biosynthetic process"/>
    <property type="evidence" value="ECO:0007669"/>
    <property type="project" value="UniProtKB-UniRule"/>
</dbReference>
<dbReference type="GO" id="GO:0008360">
    <property type="term" value="P:regulation of cell shape"/>
    <property type="evidence" value="ECO:0007669"/>
    <property type="project" value="UniProtKB-KW"/>
</dbReference>
<dbReference type="Gene3D" id="1.10.3810.10">
    <property type="entry name" value="Biosynthetic peptidoglycan transglycosylase-like"/>
    <property type="match status" value="1"/>
</dbReference>
<dbReference type="HAMAP" id="MF_00766">
    <property type="entry name" value="PGT_MtgA"/>
    <property type="match status" value="1"/>
</dbReference>
<dbReference type="InterPro" id="IPR001264">
    <property type="entry name" value="Glyco_trans_51"/>
</dbReference>
<dbReference type="InterPro" id="IPR023346">
    <property type="entry name" value="Lysozyme-like_dom_sf"/>
</dbReference>
<dbReference type="InterPro" id="IPR036950">
    <property type="entry name" value="PBP_transglycosylase"/>
</dbReference>
<dbReference type="InterPro" id="IPR011812">
    <property type="entry name" value="Pep_trsgly"/>
</dbReference>
<dbReference type="NCBIfam" id="TIGR02070">
    <property type="entry name" value="mono_pep_trsgly"/>
    <property type="match status" value="1"/>
</dbReference>
<dbReference type="PANTHER" id="PTHR30400:SF0">
    <property type="entry name" value="BIOSYNTHETIC PEPTIDOGLYCAN TRANSGLYCOSYLASE"/>
    <property type="match status" value="1"/>
</dbReference>
<dbReference type="PANTHER" id="PTHR30400">
    <property type="entry name" value="MONOFUNCTIONAL BIOSYNTHETIC PEPTIDOGLYCAN TRANSGLYCOSYLASE"/>
    <property type="match status" value="1"/>
</dbReference>
<dbReference type="Pfam" id="PF00912">
    <property type="entry name" value="Transgly"/>
    <property type="match status" value="1"/>
</dbReference>
<dbReference type="SUPFAM" id="SSF53955">
    <property type="entry name" value="Lysozyme-like"/>
    <property type="match status" value="1"/>
</dbReference>
<evidence type="ECO:0000255" key="1">
    <source>
        <dbReference type="HAMAP-Rule" id="MF_00766"/>
    </source>
</evidence>
<feature type="chain" id="PRO_1000133606" description="Biosynthetic peptidoglycan transglycosylase">
    <location>
        <begin position="1"/>
        <end position="242"/>
    </location>
</feature>
<feature type="transmembrane region" description="Helical" evidence="1">
    <location>
        <begin position="19"/>
        <end position="39"/>
    </location>
</feature>
<protein>
    <recommendedName>
        <fullName evidence="1">Biosynthetic peptidoglycan transglycosylase</fullName>
        <ecNumber evidence="1">2.4.99.28</ecNumber>
    </recommendedName>
    <alternativeName>
        <fullName evidence="1">Glycan polymerase</fullName>
    </alternativeName>
    <alternativeName>
        <fullName evidence="1">Peptidoglycan glycosyltransferase MtgA</fullName>
        <shortName evidence="1">PGT</shortName>
    </alternativeName>
</protein>
<name>MTGA_SALEP</name>
<sequence>MSKRRIAPLTFLRRLLLRILAALAVFWGGGIALFSVVPVPFSAVMAERQISAWLGGEFGYVAHSDWVSMADISPWMGLAVIAAEDQKFPEHWGFDVPAIEKALAHNERNESRIRGASTLSQQTAKNLFLWDGRSWLRKGLEAGLTLGIETVWSKKRILTVYLNIAEFGDGIFGVEAAAQRYFHKPASRLSVSEAALLAAVLPNPLRYKANAPSGYVRSRQAWIMRQMRQLGGESFMTRNQLN</sequence>
<proteinExistence type="inferred from homology"/>
<reference key="1">
    <citation type="journal article" date="2008" name="Genome Res.">
        <title>Comparative genome analysis of Salmonella enteritidis PT4 and Salmonella gallinarum 287/91 provides insights into evolutionary and host adaptation pathways.</title>
        <authorList>
            <person name="Thomson N.R."/>
            <person name="Clayton D.J."/>
            <person name="Windhorst D."/>
            <person name="Vernikos G."/>
            <person name="Davidson S."/>
            <person name="Churcher C."/>
            <person name="Quail M.A."/>
            <person name="Stevens M."/>
            <person name="Jones M.A."/>
            <person name="Watson M."/>
            <person name="Barron A."/>
            <person name="Layton A."/>
            <person name="Pickard D."/>
            <person name="Kingsley R.A."/>
            <person name="Bignell A."/>
            <person name="Clark L."/>
            <person name="Harris B."/>
            <person name="Ormond D."/>
            <person name="Abdellah Z."/>
            <person name="Brooks K."/>
            <person name="Cherevach I."/>
            <person name="Chillingworth T."/>
            <person name="Woodward J."/>
            <person name="Norberczak H."/>
            <person name="Lord A."/>
            <person name="Arrowsmith C."/>
            <person name="Jagels K."/>
            <person name="Moule S."/>
            <person name="Mungall K."/>
            <person name="Saunders M."/>
            <person name="Whitehead S."/>
            <person name="Chabalgoity J.A."/>
            <person name="Maskell D."/>
            <person name="Humphreys T."/>
            <person name="Roberts M."/>
            <person name="Barrow P.A."/>
            <person name="Dougan G."/>
            <person name="Parkhill J."/>
        </authorList>
    </citation>
    <scope>NUCLEOTIDE SEQUENCE [LARGE SCALE GENOMIC DNA]</scope>
    <source>
        <strain>P125109</strain>
    </source>
</reference>
<keyword id="KW-0997">Cell inner membrane</keyword>
<keyword id="KW-1003">Cell membrane</keyword>
<keyword id="KW-0133">Cell shape</keyword>
<keyword id="KW-0961">Cell wall biogenesis/degradation</keyword>
<keyword id="KW-0328">Glycosyltransferase</keyword>
<keyword id="KW-0472">Membrane</keyword>
<keyword id="KW-0573">Peptidoglycan synthesis</keyword>
<keyword id="KW-0808">Transferase</keyword>
<keyword id="KW-0812">Transmembrane</keyword>
<keyword id="KW-1133">Transmembrane helix</keyword>